<accession>Q5F8J4</accession>
<proteinExistence type="evidence at protein level"/>
<sequence>MKPVNIGLLGLGTVGGGAAAVLRDNAEEISRRLGREIRISAMCDLSEEKARQICPSAAFVKDPFELVARKDVDVVVELFGGTGIAKEAVLKAIENGKHIVTANKKLLAEYGNEIFPLAEKQNVIVQFEAAVAGGIPIIKALREGLAANRIKSIAGIINGTSNFILSEMREKGSAFADVLKEAQALGYAEADPTFDIEGNDAGHKITIMSALAFGTPMNFSACYLEGISKLDSRDIKYAEELGYRIKLLGVTRKTGKGIELRVHPTLIPESRLLANVDGVMNAVRVNADMVGETLYYGAGAGALPTASAVVADIIDIARLVEADTAHRVPHLAFQPAQVQAQTILPMDEITSSYYLRVQAKDEPGTLGQIAALLAQENVSIEALIQKGVIDQTTAEIVILTHSTVEKHIKSAIAAIEALDCVEKPITMIRMESLHD</sequence>
<name>DHOM_NEIG1</name>
<gene>
    <name evidence="9" type="ordered locus">NGO_0779</name>
</gene>
<keyword id="KW-0028">Amino-acid biosynthesis</keyword>
<keyword id="KW-0479">Metal-binding</keyword>
<keyword id="KW-0486">Methionine biosynthesis</keyword>
<keyword id="KW-0520">NAD</keyword>
<keyword id="KW-0521">NADP</keyword>
<keyword id="KW-0560">Oxidoreductase</keyword>
<keyword id="KW-1185">Reference proteome</keyword>
<keyword id="KW-0915">Sodium</keyword>
<keyword id="KW-0791">Threonine biosynthesis</keyword>
<comment type="function">
    <text evidence="6">Catalyzes the conversion of L-aspartate-beta-semialdehyde (L-Asa) to L-homoserine (L-Hse), the third step in the biosynthesis of threonine and methionine from aspartate (PubMed:34022392). Is highly specific for NAD(+), and displays an approximate 479-fold (kcat/Km) preference for NAD(+) over NADP(+) (PubMed:34022392).</text>
</comment>
<comment type="catalytic activity">
    <reaction evidence="6">
        <text>L-homoserine + NAD(+) = L-aspartate 4-semialdehyde + NADH + H(+)</text>
        <dbReference type="Rhea" id="RHEA:15757"/>
        <dbReference type="ChEBI" id="CHEBI:15378"/>
        <dbReference type="ChEBI" id="CHEBI:57476"/>
        <dbReference type="ChEBI" id="CHEBI:57540"/>
        <dbReference type="ChEBI" id="CHEBI:57945"/>
        <dbReference type="ChEBI" id="CHEBI:537519"/>
        <dbReference type="EC" id="1.1.1.3"/>
    </reaction>
    <physiologicalReaction direction="right-to-left" evidence="6">
        <dbReference type="Rhea" id="RHEA:15759"/>
    </physiologicalReaction>
</comment>
<comment type="cofactor">
    <cofactor evidence="3">
        <name>a metal cation</name>
        <dbReference type="ChEBI" id="CHEBI:25213"/>
    </cofactor>
    <text evidence="3">A sodium ion is seen in the structure; a metal ion may subtly affect the relative position of the nucleotide-binding region to influence enzyme activity, and could increase the stability of the enzyme.</text>
</comment>
<comment type="activity regulation">
    <text evidence="6">Neither NaCl nor KCl increase the activity (PubMed:34022392). L-threonine and L-serine do not markedly inhibit the oxidation activity (PubMed:34022392).</text>
</comment>
<comment type="biophysicochemical properties">
    <kinetics>
        <KM evidence="6">2.131 mM for L-homoserine</KM>
        <KM evidence="6">0.335 mM for NAD(+)</KM>
        <KM evidence="6">12.16 mM for NADP(+)</KM>
        <text evidence="6">kcat is 15.72 sec(-1) with L-homoserine as substrate. kcat is 13.45 sec(-1) with NAD(+) as substrate. kcat is 1.04 sec(-1) with NADP(+) as substrate.</text>
    </kinetics>
    <phDependence>
        <text evidence="6">Optimum pH is 10.5.</text>
    </phDependence>
    <temperatureDependence>
        <text evidence="6">Optimum temperature is 40 degrees Celsius.</text>
    </temperatureDependence>
</comment>
<comment type="pathway">
    <text evidence="3">Amino-acid biosynthesis; L-methionine biosynthesis via de novo pathway; L-homoserine from L-aspartate: step 3/3.</text>
</comment>
<comment type="pathway">
    <text evidence="3">Amino-acid biosynthesis; L-threonine biosynthesis; L-threonine from L-aspartate: step 3/5.</text>
</comment>
<comment type="subunit">
    <text evidence="6">Homotetramer.</text>
</comment>
<comment type="similarity">
    <text evidence="8">Belongs to the homoserine dehydrogenase family.</text>
</comment>
<organism>
    <name type="scientific">Neisseria gonorrhoeae (strain ATCC 700825 / FA 1090)</name>
    <dbReference type="NCBI Taxonomy" id="242231"/>
    <lineage>
        <taxon>Bacteria</taxon>
        <taxon>Pseudomonadati</taxon>
        <taxon>Pseudomonadota</taxon>
        <taxon>Betaproteobacteria</taxon>
        <taxon>Neisseriales</taxon>
        <taxon>Neisseriaceae</taxon>
        <taxon>Neisseria</taxon>
    </lineage>
</organism>
<reference key="1">
    <citation type="submission" date="2003-03" db="EMBL/GenBank/DDBJ databases">
        <title>The complete genome sequence of Neisseria gonorrhoeae.</title>
        <authorList>
            <person name="Lewis L.A."/>
            <person name="Gillaspy A.F."/>
            <person name="McLaughlin R.E."/>
            <person name="Gipson M."/>
            <person name="Ducey T.F."/>
            <person name="Ownbey T."/>
            <person name="Hartman K."/>
            <person name="Nydick C."/>
            <person name="Carson M.B."/>
            <person name="Vaughn J."/>
            <person name="Thomson C."/>
            <person name="Song L."/>
            <person name="Lin S."/>
            <person name="Yuan X."/>
            <person name="Najar F."/>
            <person name="Zhan M."/>
            <person name="Ren Q."/>
            <person name="Zhu H."/>
            <person name="Qi S."/>
            <person name="Kenton S.M."/>
            <person name="Lai H."/>
            <person name="White J.D."/>
            <person name="Clifton S."/>
            <person name="Roe B.A."/>
            <person name="Dyer D.W."/>
        </authorList>
    </citation>
    <scope>NUCLEOTIDE SEQUENCE [LARGE SCALE GENOMIC DNA]</scope>
    <source>
        <strain>ATCC 700825 / FA 1090</strain>
    </source>
</reference>
<reference key="2">
    <citation type="journal article" date="2021" name="Protein Expr. Purif.">
        <title>Biochemical characterization and redesign of the coenzyme specificity of a novel monofunctional NAD+-dependent homoserine dehydrogenase from the human pathogen Neisseria gonorrhoeae.</title>
        <authorList>
            <person name="Tang W."/>
            <person name="Dong X."/>
            <person name="Meng J."/>
            <person name="Feng Y."/>
            <person name="Xie M."/>
            <person name="Xu H."/>
            <person name="Song P."/>
        </authorList>
    </citation>
    <scope>FUNCTION</scope>
    <scope>CATALYTIC ACTIVITY</scope>
    <scope>ACTIVITY REGULATION</scope>
    <scope>BIOPHYSICOCHEMICAL PROPERTIES</scope>
    <scope>SUBUNIT</scope>
    <scope>MUTAGENESIS OF 45-LEU-SER-46 AND LEU-45</scope>
    <source>
        <strain>ATCC 700825 / FA 1090</strain>
    </source>
</reference>
<evidence type="ECO:0000250" key="1">
    <source>
        <dbReference type="UniProtKB" id="F9VNG5"/>
    </source>
</evidence>
<evidence type="ECO:0000250" key="2">
    <source>
        <dbReference type="UniProtKB" id="O58802"/>
    </source>
</evidence>
<evidence type="ECO:0000250" key="3">
    <source>
        <dbReference type="UniProtKB" id="P31116"/>
    </source>
</evidence>
<evidence type="ECO:0000255" key="4">
    <source>
        <dbReference type="PIRSR" id="PIRSR036497-1"/>
    </source>
</evidence>
<evidence type="ECO:0000255" key="5">
    <source>
        <dbReference type="PROSITE-ProRule" id="PRU01007"/>
    </source>
</evidence>
<evidence type="ECO:0000269" key="6">
    <source>
    </source>
</evidence>
<evidence type="ECO:0000303" key="7">
    <source>
    </source>
</evidence>
<evidence type="ECO:0000305" key="8"/>
<evidence type="ECO:0000312" key="9">
    <source>
        <dbReference type="EMBL" id="AAW89493.1"/>
    </source>
</evidence>
<protein>
    <recommendedName>
        <fullName>Homoserine dehydrogenase</fullName>
        <shortName>HDH</shortName>
        <shortName>HSD</shortName>
        <ecNumber evidence="6">1.1.1.3</ecNumber>
    </recommendedName>
    <alternativeName>
        <fullName evidence="7">NAD(+)-dependent homoserine dehydrogenase</fullName>
        <shortName evidence="7">NAD(+)-dependent HSD</shortName>
    </alternativeName>
    <alternativeName>
        <fullName evidence="7">NgHSD</fullName>
    </alternativeName>
</protein>
<dbReference type="EC" id="1.1.1.3" evidence="6"/>
<dbReference type="EMBL" id="AE004969">
    <property type="protein sequence ID" value="AAW89493.1"/>
    <property type="molecule type" value="Genomic_DNA"/>
</dbReference>
<dbReference type="RefSeq" id="WP_003695291.1">
    <property type="nucleotide sequence ID" value="NC_002946.2"/>
</dbReference>
<dbReference type="RefSeq" id="YP_207905.1">
    <property type="nucleotide sequence ID" value="NC_002946.2"/>
</dbReference>
<dbReference type="SMR" id="Q5F8J4"/>
<dbReference type="STRING" id="242231.NGO_0779"/>
<dbReference type="KEGG" id="ngo:NGO_0779"/>
<dbReference type="PATRIC" id="fig|242231.10.peg.924"/>
<dbReference type="HOGENOM" id="CLU_009116_1_0_4"/>
<dbReference type="UniPathway" id="UPA00050">
    <property type="reaction ID" value="UER00063"/>
</dbReference>
<dbReference type="UniPathway" id="UPA00051">
    <property type="reaction ID" value="UER00465"/>
</dbReference>
<dbReference type="Proteomes" id="UP000000535">
    <property type="component" value="Chromosome"/>
</dbReference>
<dbReference type="GO" id="GO:0004412">
    <property type="term" value="F:homoserine dehydrogenase activity"/>
    <property type="evidence" value="ECO:0000250"/>
    <property type="project" value="UniProtKB"/>
</dbReference>
<dbReference type="GO" id="GO:0046872">
    <property type="term" value="F:metal ion binding"/>
    <property type="evidence" value="ECO:0007669"/>
    <property type="project" value="UniProtKB-KW"/>
</dbReference>
<dbReference type="GO" id="GO:0070403">
    <property type="term" value="F:NAD+ binding"/>
    <property type="evidence" value="ECO:0000250"/>
    <property type="project" value="UniProtKB"/>
</dbReference>
<dbReference type="GO" id="GO:0050661">
    <property type="term" value="F:NADP binding"/>
    <property type="evidence" value="ECO:0007669"/>
    <property type="project" value="InterPro"/>
</dbReference>
<dbReference type="GO" id="GO:0009086">
    <property type="term" value="P:methionine biosynthetic process"/>
    <property type="evidence" value="ECO:0000250"/>
    <property type="project" value="UniProtKB"/>
</dbReference>
<dbReference type="GO" id="GO:0009088">
    <property type="term" value="P:threonine biosynthetic process"/>
    <property type="evidence" value="ECO:0000250"/>
    <property type="project" value="UniProtKB"/>
</dbReference>
<dbReference type="CDD" id="cd04881">
    <property type="entry name" value="ACT_HSDH-Hom"/>
    <property type="match status" value="1"/>
</dbReference>
<dbReference type="FunFam" id="3.30.360.10:FF:000005">
    <property type="entry name" value="Homoserine dehydrogenase"/>
    <property type="match status" value="1"/>
</dbReference>
<dbReference type="FunFam" id="3.30.70.260:FF:000030">
    <property type="entry name" value="Homoserine dehydrogenase"/>
    <property type="match status" value="1"/>
</dbReference>
<dbReference type="Gene3D" id="3.30.70.260">
    <property type="match status" value="1"/>
</dbReference>
<dbReference type="Gene3D" id="3.30.360.10">
    <property type="entry name" value="Dihydrodipicolinate Reductase, domain 2"/>
    <property type="match status" value="1"/>
</dbReference>
<dbReference type="Gene3D" id="3.40.50.720">
    <property type="entry name" value="NAD(P)-binding Rossmann-like Domain"/>
    <property type="match status" value="1"/>
</dbReference>
<dbReference type="InterPro" id="IPR045865">
    <property type="entry name" value="ACT-like_dom_sf"/>
</dbReference>
<dbReference type="InterPro" id="IPR002912">
    <property type="entry name" value="ACT_dom"/>
</dbReference>
<dbReference type="InterPro" id="IPR005106">
    <property type="entry name" value="Asp/hSer_DH_NAD-bd"/>
</dbReference>
<dbReference type="InterPro" id="IPR016204">
    <property type="entry name" value="HDH"/>
</dbReference>
<dbReference type="InterPro" id="IPR001342">
    <property type="entry name" value="HDH_cat"/>
</dbReference>
<dbReference type="InterPro" id="IPR019811">
    <property type="entry name" value="HDH_CS"/>
</dbReference>
<dbReference type="InterPro" id="IPR036291">
    <property type="entry name" value="NAD(P)-bd_dom_sf"/>
</dbReference>
<dbReference type="NCBIfam" id="NF004976">
    <property type="entry name" value="PRK06349.1"/>
    <property type="match status" value="1"/>
</dbReference>
<dbReference type="PANTHER" id="PTHR43331">
    <property type="entry name" value="HOMOSERINE DEHYDROGENASE"/>
    <property type="match status" value="1"/>
</dbReference>
<dbReference type="PANTHER" id="PTHR43331:SF1">
    <property type="entry name" value="HOMOSERINE DEHYDROGENASE"/>
    <property type="match status" value="1"/>
</dbReference>
<dbReference type="Pfam" id="PF01842">
    <property type="entry name" value="ACT"/>
    <property type="match status" value="1"/>
</dbReference>
<dbReference type="Pfam" id="PF00742">
    <property type="entry name" value="Homoserine_dh"/>
    <property type="match status" value="1"/>
</dbReference>
<dbReference type="Pfam" id="PF03447">
    <property type="entry name" value="NAD_binding_3"/>
    <property type="match status" value="1"/>
</dbReference>
<dbReference type="PIRSF" id="PIRSF000098">
    <property type="entry name" value="Homoser_dehydrog"/>
    <property type="match status" value="1"/>
</dbReference>
<dbReference type="SUPFAM" id="SSF55021">
    <property type="entry name" value="ACT-like"/>
    <property type="match status" value="1"/>
</dbReference>
<dbReference type="SUPFAM" id="SSF55347">
    <property type="entry name" value="Glyceraldehyde-3-phosphate dehydrogenase-like, C-terminal domain"/>
    <property type="match status" value="1"/>
</dbReference>
<dbReference type="SUPFAM" id="SSF51735">
    <property type="entry name" value="NAD(P)-binding Rossmann-fold domains"/>
    <property type="match status" value="1"/>
</dbReference>
<dbReference type="PROSITE" id="PS51671">
    <property type="entry name" value="ACT"/>
    <property type="match status" value="1"/>
</dbReference>
<dbReference type="PROSITE" id="PS01042">
    <property type="entry name" value="HOMOSER_DHGENASE"/>
    <property type="match status" value="1"/>
</dbReference>
<feature type="chain" id="PRO_0000458838" description="Homoserine dehydrogenase">
    <location>
        <begin position="1"/>
        <end position="435"/>
    </location>
</feature>
<feature type="domain" description="ACT" evidence="5">
    <location>
        <begin position="354"/>
        <end position="429"/>
    </location>
</feature>
<feature type="active site" description="Proton donor" evidence="4">
    <location>
        <position position="204"/>
    </location>
</feature>
<feature type="binding site" evidence="2">
    <location>
        <position position="13"/>
    </location>
    <ligand>
        <name>NADPH</name>
        <dbReference type="ChEBI" id="CHEBI:57783"/>
    </ligand>
</feature>
<feature type="binding site" evidence="3">
    <location>
        <position position="14"/>
    </location>
    <ligand>
        <name>NAD(+)</name>
        <dbReference type="ChEBI" id="CHEBI:57540"/>
    </ligand>
</feature>
<feature type="binding site" evidence="1">
    <location>
        <position position="14"/>
    </location>
    <ligand>
        <name>NADP(+)</name>
        <dbReference type="ChEBI" id="CHEBI:58349"/>
    </ligand>
</feature>
<feature type="binding site" evidence="2">
    <location>
        <position position="14"/>
    </location>
    <ligand>
        <name>NADPH</name>
        <dbReference type="ChEBI" id="CHEBI:57783"/>
    </ligand>
</feature>
<feature type="binding site" evidence="1">
    <location>
        <position position="104"/>
    </location>
    <ligand>
        <name>NADP(+)</name>
        <dbReference type="ChEBI" id="CHEBI:58349"/>
    </ligand>
</feature>
<feature type="binding site" evidence="2">
    <location>
        <position position="104"/>
    </location>
    <ligand>
        <name>NADPH</name>
        <dbReference type="ChEBI" id="CHEBI:57783"/>
    </ligand>
</feature>
<feature type="binding site" evidence="3">
    <location>
        <position position="128"/>
    </location>
    <ligand>
        <name>Na(+)</name>
        <dbReference type="ChEBI" id="CHEBI:29101"/>
    </ligand>
</feature>
<feature type="binding site" evidence="3">
    <location>
        <position position="131"/>
    </location>
    <ligand>
        <name>Na(+)</name>
        <dbReference type="ChEBI" id="CHEBI:29101"/>
    </ligand>
</feature>
<feature type="binding site" evidence="3">
    <location>
        <position position="133"/>
    </location>
    <ligand>
        <name>Na(+)</name>
        <dbReference type="ChEBI" id="CHEBI:29101"/>
    </ligand>
</feature>
<feature type="binding site" evidence="3">
    <location>
        <position position="135"/>
    </location>
    <ligand>
        <name>Na(+)</name>
        <dbReference type="ChEBI" id="CHEBI:29101"/>
    </ligand>
</feature>
<feature type="binding site" evidence="1">
    <location>
        <position position="186"/>
    </location>
    <ligand>
        <name>NADP(+)</name>
        <dbReference type="ChEBI" id="CHEBI:58349"/>
    </ligand>
</feature>
<feature type="binding site" evidence="3">
    <location>
        <position position="189"/>
    </location>
    <ligand>
        <name>L-homoserine</name>
        <dbReference type="ChEBI" id="CHEBI:57476"/>
    </ligand>
</feature>
<feature type="binding site" evidence="1">
    <location>
        <position position="189"/>
    </location>
    <ligand>
        <name>NADP(+)</name>
        <dbReference type="ChEBI" id="CHEBI:58349"/>
    </ligand>
</feature>
<feature type="binding site" evidence="3">
    <location>
        <position position="200"/>
    </location>
    <ligand>
        <name>L-homoserine</name>
        <dbReference type="ChEBI" id="CHEBI:57476"/>
    </ligand>
</feature>
<feature type="binding site" evidence="3">
    <location>
        <position position="301"/>
    </location>
    <ligand>
        <name>NAD(+)</name>
        <dbReference type="ChEBI" id="CHEBI:57540"/>
    </ligand>
</feature>
<feature type="binding site" evidence="1">
    <location>
        <position position="301"/>
    </location>
    <ligand>
        <name>NADP(+)</name>
        <dbReference type="ChEBI" id="CHEBI:58349"/>
    </ligand>
</feature>
<feature type="binding site" evidence="2">
    <location>
        <position position="301"/>
    </location>
    <ligand>
        <name>NADPH</name>
        <dbReference type="ChEBI" id="CHEBI:57783"/>
    </ligand>
</feature>
<feature type="mutagenesis site" description="Does not impair the catalytic activity with NAD(+). Slightly increases the activity, but slightly decreases the affinity for NADP(+)." evidence="6">
    <original>LS</original>
    <variation>RD</variation>
    <location>
        <begin position="45"/>
        <end position="46"/>
    </location>
</feature>
<feature type="mutagenesis site" description="Causes a shift in coenzyme preference from NAD(+) to NADP(+) by a factor of 974. Shows a slight decrease in the catalytic efficiency with NAD(+) and a 4.5-fold increase in catalytic efficiency with NADP(+)." evidence="6">
    <original>LS</original>
    <variation>RR</variation>
    <location>
        <begin position="45"/>
        <end position="46"/>
    </location>
</feature>
<feature type="mutagenesis site" description="Shows a marked increase in the catalytic efficiency with NADP(+)." evidence="6">
    <original>L</original>
    <variation>R</variation>
    <location>
        <position position="45"/>
    </location>
</feature>